<organism>
    <name type="scientific">Escherichia coli O8 (strain IAI1)</name>
    <dbReference type="NCBI Taxonomy" id="585034"/>
    <lineage>
        <taxon>Bacteria</taxon>
        <taxon>Pseudomonadati</taxon>
        <taxon>Pseudomonadota</taxon>
        <taxon>Gammaproteobacteria</taxon>
        <taxon>Enterobacterales</taxon>
        <taxon>Enterobacteriaceae</taxon>
        <taxon>Escherichia</taxon>
    </lineage>
</organism>
<name>TRUD_ECO8A</name>
<feature type="chain" id="PRO_1000136832" description="tRNA pseudouridine synthase D">
    <location>
        <begin position="1"/>
        <end position="349"/>
    </location>
</feature>
<feature type="domain" description="TRUD" evidence="1">
    <location>
        <begin position="155"/>
        <end position="303"/>
    </location>
</feature>
<feature type="active site" description="Nucleophile" evidence="1">
    <location>
        <position position="80"/>
    </location>
</feature>
<feature type="binding site" evidence="1">
    <location>
        <position position="27"/>
    </location>
    <ligand>
        <name>substrate</name>
    </ligand>
</feature>
<feature type="binding site" evidence="1">
    <location>
        <position position="129"/>
    </location>
    <ligand>
        <name>substrate</name>
    </ligand>
</feature>
<feature type="binding site" evidence="1">
    <location>
        <position position="329"/>
    </location>
    <ligand>
        <name>substrate</name>
    </ligand>
</feature>
<protein>
    <recommendedName>
        <fullName evidence="1">tRNA pseudouridine synthase D</fullName>
        <ecNumber evidence="1">5.4.99.27</ecNumber>
    </recommendedName>
    <alternativeName>
        <fullName evidence="1">tRNA pseudouridine(13) synthase</fullName>
    </alternativeName>
    <alternativeName>
        <fullName evidence="1">tRNA pseudouridylate synthase D</fullName>
    </alternativeName>
    <alternativeName>
        <fullName evidence="1">tRNA-uridine isomerase D</fullName>
    </alternativeName>
</protein>
<keyword id="KW-0413">Isomerase</keyword>
<keyword id="KW-0819">tRNA processing</keyword>
<sequence>MIEFDNLTYLHGKPQGTGLLKANPEDFVVVEDLGFEPDGEGEHILVRILKNGCNTRFVADALAKFLKIHAREVSFAGQKDKHAVTEQWLCARVPGKEMPDLSAFQLEGCQVLEYARHKRKLRLGALKGNAFTLVLREVSNRDDVEQRLIDICVKGVPNYFGAQRFGIGGSNLQGALRWAQTNTPVRDRNKRSFWLSAARSALFNQIVAERLKKADVNQVVDGDALQLAGRGSWFVATTEELAELQRRVNDKELMITAALPGSGEWGTQREALAFEQAAVAAETELQALLVREKVEAARRAMLLYPQQFSWNWWDDVTVEIRFWLPAGSFATSVVRELINTTGDYAHIAE</sequence>
<evidence type="ECO:0000255" key="1">
    <source>
        <dbReference type="HAMAP-Rule" id="MF_01082"/>
    </source>
</evidence>
<reference key="1">
    <citation type="journal article" date="2009" name="PLoS Genet.">
        <title>Organised genome dynamics in the Escherichia coli species results in highly diverse adaptive paths.</title>
        <authorList>
            <person name="Touchon M."/>
            <person name="Hoede C."/>
            <person name="Tenaillon O."/>
            <person name="Barbe V."/>
            <person name="Baeriswyl S."/>
            <person name="Bidet P."/>
            <person name="Bingen E."/>
            <person name="Bonacorsi S."/>
            <person name="Bouchier C."/>
            <person name="Bouvet O."/>
            <person name="Calteau A."/>
            <person name="Chiapello H."/>
            <person name="Clermont O."/>
            <person name="Cruveiller S."/>
            <person name="Danchin A."/>
            <person name="Diard M."/>
            <person name="Dossat C."/>
            <person name="Karoui M.E."/>
            <person name="Frapy E."/>
            <person name="Garry L."/>
            <person name="Ghigo J.M."/>
            <person name="Gilles A.M."/>
            <person name="Johnson J."/>
            <person name="Le Bouguenec C."/>
            <person name="Lescat M."/>
            <person name="Mangenot S."/>
            <person name="Martinez-Jehanne V."/>
            <person name="Matic I."/>
            <person name="Nassif X."/>
            <person name="Oztas S."/>
            <person name="Petit M.A."/>
            <person name="Pichon C."/>
            <person name="Rouy Z."/>
            <person name="Ruf C.S."/>
            <person name="Schneider D."/>
            <person name="Tourret J."/>
            <person name="Vacherie B."/>
            <person name="Vallenet D."/>
            <person name="Medigue C."/>
            <person name="Rocha E.P.C."/>
            <person name="Denamur E."/>
        </authorList>
    </citation>
    <scope>NUCLEOTIDE SEQUENCE [LARGE SCALE GENOMIC DNA]</scope>
    <source>
        <strain>IAI1</strain>
    </source>
</reference>
<accession>B7LXF7</accession>
<proteinExistence type="inferred from homology"/>
<gene>
    <name evidence="1" type="primary">truD</name>
    <name type="ordered locus">ECIAI1_2846</name>
</gene>
<dbReference type="EC" id="5.4.99.27" evidence="1"/>
<dbReference type="EMBL" id="CU928160">
    <property type="protein sequence ID" value="CAQ99669.1"/>
    <property type="molecule type" value="Genomic_DNA"/>
</dbReference>
<dbReference type="RefSeq" id="WP_000568923.1">
    <property type="nucleotide sequence ID" value="NC_011741.1"/>
</dbReference>
<dbReference type="SMR" id="B7LXF7"/>
<dbReference type="KEGG" id="ecr:ECIAI1_2846"/>
<dbReference type="HOGENOM" id="CLU_005281_4_0_6"/>
<dbReference type="GO" id="GO:0005829">
    <property type="term" value="C:cytosol"/>
    <property type="evidence" value="ECO:0007669"/>
    <property type="project" value="TreeGrafter"/>
</dbReference>
<dbReference type="GO" id="GO:0003723">
    <property type="term" value="F:RNA binding"/>
    <property type="evidence" value="ECO:0007669"/>
    <property type="project" value="InterPro"/>
</dbReference>
<dbReference type="GO" id="GO:0160150">
    <property type="term" value="F:tRNA pseudouridine(13) synthase activity"/>
    <property type="evidence" value="ECO:0007669"/>
    <property type="project" value="UniProtKB-EC"/>
</dbReference>
<dbReference type="GO" id="GO:0031119">
    <property type="term" value="P:tRNA pseudouridine synthesis"/>
    <property type="evidence" value="ECO:0007669"/>
    <property type="project" value="UniProtKB-UniRule"/>
</dbReference>
<dbReference type="CDD" id="cd02575">
    <property type="entry name" value="PseudoU_synth_EcTruD"/>
    <property type="match status" value="1"/>
</dbReference>
<dbReference type="FunFam" id="3.30.2340.10:FF:000001">
    <property type="entry name" value="tRNA pseudouridine synthase D"/>
    <property type="match status" value="1"/>
</dbReference>
<dbReference type="FunFam" id="3.30.2350.20:FF:000001">
    <property type="entry name" value="tRNA pseudouridine synthase D"/>
    <property type="match status" value="1"/>
</dbReference>
<dbReference type="Gene3D" id="3.30.2350.20">
    <property type="entry name" value="TruD, catalytic domain"/>
    <property type="match status" value="1"/>
</dbReference>
<dbReference type="Gene3D" id="3.30.2340.10">
    <property type="entry name" value="TruD, insertion domain"/>
    <property type="match status" value="1"/>
</dbReference>
<dbReference type="HAMAP" id="MF_01082">
    <property type="entry name" value="TruD"/>
    <property type="match status" value="1"/>
</dbReference>
<dbReference type="InterPro" id="IPR020103">
    <property type="entry name" value="PsdUridine_synth_cat_dom_sf"/>
</dbReference>
<dbReference type="InterPro" id="IPR001656">
    <property type="entry name" value="PsdUridine_synth_TruD"/>
</dbReference>
<dbReference type="InterPro" id="IPR020119">
    <property type="entry name" value="PsdUridine_synth_TruD_CS"/>
</dbReference>
<dbReference type="InterPro" id="IPR011760">
    <property type="entry name" value="PsdUridine_synth_TruD_insert"/>
</dbReference>
<dbReference type="InterPro" id="IPR042214">
    <property type="entry name" value="TruD_catalytic"/>
</dbReference>
<dbReference type="InterPro" id="IPR043165">
    <property type="entry name" value="TruD_insert_sf"/>
</dbReference>
<dbReference type="InterPro" id="IPR050170">
    <property type="entry name" value="TruD_pseudoU_synthase"/>
</dbReference>
<dbReference type="NCBIfam" id="NF002155">
    <property type="entry name" value="PRK00984.1-4"/>
    <property type="match status" value="1"/>
</dbReference>
<dbReference type="NCBIfam" id="TIGR00094">
    <property type="entry name" value="tRNA_TruD_broad"/>
    <property type="match status" value="1"/>
</dbReference>
<dbReference type="PANTHER" id="PTHR47811">
    <property type="entry name" value="TRNA PSEUDOURIDINE SYNTHASE D"/>
    <property type="match status" value="1"/>
</dbReference>
<dbReference type="PANTHER" id="PTHR47811:SF1">
    <property type="entry name" value="TRNA PSEUDOURIDINE SYNTHASE D"/>
    <property type="match status" value="1"/>
</dbReference>
<dbReference type="Pfam" id="PF01142">
    <property type="entry name" value="TruD"/>
    <property type="match status" value="2"/>
</dbReference>
<dbReference type="SUPFAM" id="SSF55120">
    <property type="entry name" value="Pseudouridine synthase"/>
    <property type="match status" value="1"/>
</dbReference>
<dbReference type="PROSITE" id="PS50984">
    <property type="entry name" value="TRUD"/>
    <property type="match status" value="1"/>
</dbReference>
<dbReference type="PROSITE" id="PS01268">
    <property type="entry name" value="UPF0024"/>
    <property type="match status" value="1"/>
</dbReference>
<comment type="function">
    <text evidence="1">Responsible for synthesis of pseudouridine from uracil-13 in transfer RNAs.</text>
</comment>
<comment type="catalytic activity">
    <reaction evidence="1">
        <text>uridine(13) in tRNA = pseudouridine(13) in tRNA</text>
        <dbReference type="Rhea" id="RHEA:42540"/>
        <dbReference type="Rhea" id="RHEA-COMP:10105"/>
        <dbReference type="Rhea" id="RHEA-COMP:10106"/>
        <dbReference type="ChEBI" id="CHEBI:65314"/>
        <dbReference type="ChEBI" id="CHEBI:65315"/>
        <dbReference type="EC" id="5.4.99.27"/>
    </reaction>
</comment>
<comment type="similarity">
    <text evidence="1">Belongs to the pseudouridine synthase TruD family.</text>
</comment>